<comment type="function">
    <text evidence="1">This protein is involved in the repair of mismatches in DNA. It is required for dam-dependent methyl-directed DNA mismatch repair. May act as a 'molecular matchmaker', a protein that promotes the formation of a stable complex between two or more DNA-binding proteins in an ATP-dependent manner without itself being part of a final effector complex.</text>
</comment>
<comment type="similarity">
    <text evidence="1">Belongs to the DNA mismatch repair MutL/HexB family.</text>
</comment>
<gene>
    <name evidence="1" type="primary">mutL</name>
    <name type="ordered locus">Kole_1603</name>
</gene>
<protein>
    <recommendedName>
        <fullName evidence="1">DNA mismatch repair protein MutL</fullName>
    </recommendedName>
</protein>
<proteinExistence type="inferred from homology"/>
<name>MUTL_KOSOT</name>
<reference key="1">
    <citation type="submission" date="2009-06" db="EMBL/GenBank/DDBJ databases">
        <title>Complete sequence of Thermotogales bacterium TBF 19.5.1.</title>
        <authorList>
            <consortium name="US DOE Joint Genome Institute"/>
            <person name="Lucas S."/>
            <person name="Copeland A."/>
            <person name="Lapidus A."/>
            <person name="Glavina del Rio T."/>
            <person name="Tice H."/>
            <person name="Bruce D."/>
            <person name="Goodwin L."/>
            <person name="Pitluck S."/>
            <person name="Chertkov O."/>
            <person name="Brettin T."/>
            <person name="Detter J.C."/>
            <person name="Han C."/>
            <person name="Schmutz J."/>
            <person name="Larimer F."/>
            <person name="Land M."/>
            <person name="Hauser L."/>
            <person name="Kyrpides N."/>
            <person name="Ovchinnikova G."/>
            <person name="Noll K."/>
        </authorList>
    </citation>
    <scope>NUCLEOTIDE SEQUENCE [LARGE SCALE GENOMIC DNA]</scope>
    <source>
        <strain>ATCC BAA-1733 / DSM 21960 / TBF 19.5.1</strain>
    </source>
</reference>
<sequence length="602" mass="68522">MKIHELPQEVILKIAAGEVVTGCFSVVKELVENALDAEATTVEVEIKAGGKEYIRVSDNGIGMLPEELKMAIKPHTTSKIQCIEDLERILTYGFRGEALSTISSVSRMRISSMPDNADLGLTIEISGGKIVREKSYIGPKGTTVEVYDLLFNTPARRKFLKSQRVEGRMVTEIVQRFILAIPDAGFKYIRDGELIYDLTPAERILERIPVVFPELSTTDLLEVKEETSGISITGYITFPERTRFNRLGEMVFVNGRYVRQPELNYAIEKGYGESLEKGRFPFAILFISVNPEMIDVNIHPQKLEVRFSNPSLVFDAIKRAVRNTLRTSGTSILRIEKRPFPGSSTNYSGIQQDTKKQESDNPEKARGYGTHLRETHWEQRDHFEKRKVPLHYQPDNELLLNIERTASRRFEKTEAKETGEPRLFGVFGERYILAETKDGLLIVDQHAAHERLIYEKLKKAAKIQSQKLLSPIRLTLEDSRKSLLREKKNDVEKLGFQISFEGDRIFLTGIPSILSESVAVNALNEVLDELRLEGLEEPEKIFDHLLSTLACKSAIKTGDRLSESEAKELLEKLLEEEILFCPHGRPVSMLIRFKDLDRHFSR</sequence>
<dbReference type="EMBL" id="CP001634">
    <property type="protein sequence ID" value="ACR80293.1"/>
    <property type="molecule type" value="Genomic_DNA"/>
</dbReference>
<dbReference type="RefSeq" id="WP_015868938.1">
    <property type="nucleotide sequence ID" value="NC_012785.1"/>
</dbReference>
<dbReference type="SMR" id="C5CF28"/>
<dbReference type="STRING" id="521045.Kole_1603"/>
<dbReference type="KEGG" id="kol:Kole_1603"/>
<dbReference type="eggNOG" id="COG0323">
    <property type="taxonomic scope" value="Bacteria"/>
</dbReference>
<dbReference type="HOGENOM" id="CLU_004131_4_1_0"/>
<dbReference type="OrthoDB" id="9763467at2"/>
<dbReference type="Proteomes" id="UP000002382">
    <property type="component" value="Chromosome"/>
</dbReference>
<dbReference type="GO" id="GO:0032300">
    <property type="term" value="C:mismatch repair complex"/>
    <property type="evidence" value="ECO:0007669"/>
    <property type="project" value="InterPro"/>
</dbReference>
<dbReference type="GO" id="GO:0005524">
    <property type="term" value="F:ATP binding"/>
    <property type="evidence" value="ECO:0007669"/>
    <property type="project" value="InterPro"/>
</dbReference>
<dbReference type="GO" id="GO:0016887">
    <property type="term" value="F:ATP hydrolysis activity"/>
    <property type="evidence" value="ECO:0007669"/>
    <property type="project" value="InterPro"/>
</dbReference>
<dbReference type="GO" id="GO:0140664">
    <property type="term" value="F:ATP-dependent DNA damage sensor activity"/>
    <property type="evidence" value="ECO:0007669"/>
    <property type="project" value="InterPro"/>
</dbReference>
<dbReference type="GO" id="GO:0030983">
    <property type="term" value="F:mismatched DNA binding"/>
    <property type="evidence" value="ECO:0007669"/>
    <property type="project" value="InterPro"/>
</dbReference>
<dbReference type="GO" id="GO:0006298">
    <property type="term" value="P:mismatch repair"/>
    <property type="evidence" value="ECO:0007669"/>
    <property type="project" value="UniProtKB-UniRule"/>
</dbReference>
<dbReference type="CDD" id="cd16926">
    <property type="entry name" value="HATPase_MutL-MLH-PMS-like"/>
    <property type="match status" value="1"/>
</dbReference>
<dbReference type="CDD" id="cd00782">
    <property type="entry name" value="MutL_Trans"/>
    <property type="match status" value="1"/>
</dbReference>
<dbReference type="FunFam" id="3.30.565.10:FF:000003">
    <property type="entry name" value="DNA mismatch repair endonuclease MutL"/>
    <property type="match status" value="1"/>
</dbReference>
<dbReference type="Gene3D" id="3.30.230.10">
    <property type="match status" value="1"/>
</dbReference>
<dbReference type="Gene3D" id="3.30.565.10">
    <property type="entry name" value="Histidine kinase-like ATPase, C-terminal domain"/>
    <property type="match status" value="1"/>
</dbReference>
<dbReference type="Gene3D" id="3.30.1540.20">
    <property type="entry name" value="MutL, C-terminal domain, dimerisation subdomain"/>
    <property type="match status" value="1"/>
</dbReference>
<dbReference type="Gene3D" id="3.30.1370.100">
    <property type="entry name" value="MutL, C-terminal domain, regulatory subdomain"/>
    <property type="match status" value="1"/>
</dbReference>
<dbReference type="HAMAP" id="MF_00149">
    <property type="entry name" value="DNA_mis_repair"/>
    <property type="match status" value="1"/>
</dbReference>
<dbReference type="InterPro" id="IPR014762">
    <property type="entry name" value="DNA_mismatch_repair_CS"/>
</dbReference>
<dbReference type="InterPro" id="IPR020667">
    <property type="entry name" value="DNA_mismatch_repair_MutL"/>
</dbReference>
<dbReference type="InterPro" id="IPR013507">
    <property type="entry name" value="DNA_mismatch_S5_2-like"/>
</dbReference>
<dbReference type="InterPro" id="IPR036890">
    <property type="entry name" value="HATPase_C_sf"/>
</dbReference>
<dbReference type="InterPro" id="IPR002099">
    <property type="entry name" value="MutL/Mlh/PMS"/>
</dbReference>
<dbReference type="InterPro" id="IPR038973">
    <property type="entry name" value="MutL/Mlh/Pms-like"/>
</dbReference>
<dbReference type="InterPro" id="IPR014790">
    <property type="entry name" value="MutL_C"/>
</dbReference>
<dbReference type="InterPro" id="IPR042120">
    <property type="entry name" value="MutL_C_dimsub"/>
</dbReference>
<dbReference type="InterPro" id="IPR042121">
    <property type="entry name" value="MutL_C_regsub"/>
</dbReference>
<dbReference type="InterPro" id="IPR037198">
    <property type="entry name" value="MutL_C_sf"/>
</dbReference>
<dbReference type="InterPro" id="IPR020568">
    <property type="entry name" value="Ribosomal_Su5_D2-typ_SF"/>
</dbReference>
<dbReference type="InterPro" id="IPR014721">
    <property type="entry name" value="Ribsml_uS5_D2-typ_fold_subgr"/>
</dbReference>
<dbReference type="NCBIfam" id="TIGR00585">
    <property type="entry name" value="mutl"/>
    <property type="match status" value="1"/>
</dbReference>
<dbReference type="PANTHER" id="PTHR10073">
    <property type="entry name" value="DNA MISMATCH REPAIR PROTEIN MLH, PMS, MUTL"/>
    <property type="match status" value="1"/>
</dbReference>
<dbReference type="PANTHER" id="PTHR10073:SF12">
    <property type="entry name" value="DNA MISMATCH REPAIR PROTEIN MLH1"/>
    <property type="match status" value="1"/>
</dbReference>
<dbReference type="Pfam" id="PF01119">
    <property type="entry name" value="DNA_mis_repair"/>
    <property type="match status" value="1"/>
</dbReference>
<dbReference type="Pfam" id="PF13589">
    <property type="entry name" value="HATPase_c_3"/>
    <property type="match status" value="1"/>
</dbReference>
<dbReference type="Pfam" id="PF08676">
    <property type="entry name" value="MutL_C"/>
    <property type="match status" value="1"/>
</dbReference>
<dbReference type="SMART" id="SM01340">
    <property type="entry name" value="DNA_mis_repair"/>
    <property type="match status" value="1"/>
</dbReference>
<dbReference type="SMART" id="SM00853">
    <property type="entry name" value="MutL_C"/>
    <property type="match status" value="1"/>
</dbReference>
<dbReference type="SUPFAM" id="SSF55874">
    <property type="entry name" value="ATPase domain of HSP90 chaperone/DNA topoisomerase II/histidine kinase"/>
    <property type="match status" value="1"/>
</dbReference>
<dbReference type="SUPFAM" id="SSF118116">
    <property type="entry name" value="DNA mismatch repair protein MutL"/>
    <property type="match status" value="1"/>
</dbReference>
<dbReference type="SUPFAM" id="SSF54211">
    <property type="entry name" value="Ribosomal protein S5 domain 2-like"/>
    <property type="match status" value="1"/>
</dbReference>
<dbReference type="PROSITE" id="PS00058">
    <property type="entry name" value="DNA_MISMATCH_REPAIR_1"/>
    <property type="match status" value="1"/>
</dbReference>
<evidence type="ECO:0000255" key="1">
    <source>
        <dbReference type="HAMAP-Rule" id="MF_00149"/>
    </source>
</evidence>
<evidence type="ECO:0000256" key="2">
    <source>
        <dbReference type="SAM" id="MobiDB-lite"/>
    </source>
</evidence>
<keyword id="KW-0227">DNA damage</keyword>
<keyword id="KW-0234">DNA repair</keyword>
<keyword id="KW-1185">Reference proteome</keyword>
<organism>
    <name type="scientific">Kosmotoga olearia (strain ATCC BAA-1733 / DSM 21960 / TBF 19.5.1)</name>
    <dbReference type="NCBI Taxonomy" id="521045"/>
    <lineage>
        <taxon>Bacteria</taxon>
        <taxon>Thermotogati</taxon>
        <taxon>Thermotogota</taxon>
        <taxon>Thermotogae</taxon>
        <taxon>Kosmotogales</taxon>
        <taxon>Kosmotogaceae</taxon>
        <taxon>Kosmotoga</taxon>
    </lineage>
</organism>
<feature type="chain" id="PRO_1000203391" description="DNA mismatch repair protein MutL">
    <location>
        <begin position="1"/>
        <end position="602"/>
    </location>
</feature>
<feature type="region of interest" description="Disordered" evidence="2">
    <location>
        <begin position="337"/>
        <end position="367"/>
    </location>
</feature>
<feature type="compositionally biased region" description="Polar residues" evidence="2">
    <location>
        <begin position="342"/>
        <end position="352"/>
    </location>
</feature>
<feature type="compositionally biased region" description="Basic and acidic residues" evidence="2">
    <location>
        <begin position="353"/>
        <end position="367"/>
    </location>
</feature>
<accession>C5CF28</accession>